<accession>P0A1I7</accession>
<accession>P16438</accession>
<proteinExistence type="evidence at protein level"/>
<feature type="chain" id="PRO_0000180807" description="Flagellar basal-body rod protein FlgC">
    <location>
        <begin position="1"/>
        <end position="134"/>
    </location>
</feature>
<feature type="sequence conflict" description="In Ref. 1 and 2." evidence="1" ref="1 2">
    <original>S</original>
    <variation>T</variation>
    <location>
        <position position="111"/>
    </location>
</feature>
<feature type="helix" evidence="2">
    <location>
        <begin position="5"/>
        <end position="29"/>
    </location>
</feature>
<feature type="helix" evidence="3">
    <location>
        <begin position="30"/>
        <end position="32"/>
    </location>
</feature>
<feature type="strand" evidence="2">
    <location>
        <begin position="37"/>
        <end position="39"/>
    </location>
</feature>
<feature type="strand" evidence="2">
    <location>
        <begin position="50"/>
        <end position="52"/>
    </location>
</feature>
<feature type="strand" evidence="2">
    <location>
        <begin position="55"/>
        <end position="58"/>
    </location>
</feature>
<feature type="strand" evidence="3">
    <location>
        <begin position="61"/>
        <end position="69"/>
    </location>
</feature>
<feature type="strand" evidence="3">
    <location>
        <begin position="75"/>
        <end position="78"/>
    </location>
</feature>
<feature type="strand" evidence="2">
    <location>
        <begin position="82"/>
        <end position="84"/>
    </location>
</feature>
<feature type="strand" evidence="3">
    <location>
        <begin position="89"/>
        <end position="93"/>
    </location>
</feature>
<feature type="helix" evidence="2">
    <location>
        <begin position="98"/>
        <end position="130"/>
    </location>
</feature>
<comment type="subunit">
    <text>The basal body constitutes a major portion of the flagellar organelle and consists of four rings (L,P,S, and M) mounted on a central rod. The rod consists of about 26 subunits of FlgG in the distal portion, and FlgB, FlgC and FlgF are thought to build up the proximal portion of the rod with about 6 subunits each.</text>
</comment>
<comment type="subcellular location">
    <subcellularLocation>
        <location>Bacterial flagellum basal body</location>
    </subcellularLocation>
</comment>
<comment type="similarity">
    <text evidence="1">Belongs to the flagella basal body rod proteins family.</text>
</comment>
<sequence length="134" mass="13982">MALLNIFDIAGSALAAQSKRLNVAASNLANADSVTGPDGQPYRAKQVVFQVDAAPGQATGGVKVASVIESQAPEKLVYEPGNPLADANGYVKMPNVDVVGEMVNTMSASRSYQANIEVLNTVKSMMLKTLTLGQ</sequence>
<evidence type="ECO:0000305" key="1"/>
<evidence type="ECO:0007829" key="2">
    <source>
        <dbReference type="PDB" id="7BIN"/>
    </source>
</evidence>
<evidence type="ECO:0007829" key="3">
    <source>
        <dbReference type="PDB" id="7CG0"/>
    </source>
</evidence>
<name>FLGC_SALTY</name>
<organism>
    <name type="scientific">Salmonella typhimurium (strain LT2 / SGSC1412 / ATCC 700720)</name>
    <dbReference type="NCBI Taxonomy" id="99287"/>
    <lineage>
        <taxon>Bacteria</taxon>
        <taxon>Pseudomonadati</taxon>
        <taxon>Pseudomonadota</taxon>
        <taxon>Gammaproteobacteria</taxon>
        <taxon>Enterobacterales</taxon>
        <taxon>Enterobacteriaceae</taxon>
        <taxon>Salmonella</taxon>
    </lineage>
</organism>
<gene>
    <name type="primary">flgC</name>
    <name type="synonym">fla FIII</name>
    <name type="synonym">flaW</name>
    <name type="ordered locus">STM1175</name>
</gene>
<keyword id="KW-0002">3D-structure</keyword>
<keyword id="KW-0975">Bacterial flagellum</keyword>
<keyword id="KW-0903">Direct protein sequencing</keyword>
<keyword id="KW-1185">Reference proteome</keyword>
<dbReference type="EMBL" id="X52093">
    <property type="protein sequence ID" value="CAA36310.1"/>
    <property type="molecule type" value="Genomic_DNA"/>
</dbReference>
<dbReference type="EMBL" id="D13703">
    <property type="protein sequence ID" value="BAA02862.1"/>
    <property type="molecule type" value="Genomic_DNA"/>
</dbReference>
<dbReference type="EMBL" id="AE006468">
    <property type="protein sequence ID" value="AAL20105.1"/>
    <property type="molecule type" value="Genomic_DNA"/>
</dbReference>
<dbReference type="PIR" id="S08172">
    <property type="entry name" value="XMEBFC"/>
</dbReference>
<dbReference type="RefSeq" id="NP_460146.1">
    <property type="nucleotide sequence ID" value="NC_003197.2"/>
</dbReference>
<dbReference type="RefSeq" id="WP_001196448.1">
    <property type="nucleotide sequence ID" value="NC_003197.2"/>
</dbReference>
<dbReference type="PDB" id="7BIN">
    <property type="method" value="EM"/>
    <property type="resolution" value="3.20 A"/>
    <property type="chains" value="V/W/X/Y/Z/a=1-134"/>
</dbReference>
<dbReference type="PDB" id="7CG0">
    <property type="method" value="EM"/>
    <property type="resolution" value="3.20 A"/>
    <property type="chains" value="f/g/h/i/j/p=1-134"/>
</dbReference>
<dbReference type="PDB" id="7CGO">
    <property type="method" value="EM"/>
    <property type="resolution" value="3.90 A"/>
    <property type="chains" value="f/g/h/i/j/p=1-134"/>
</dbReference>
<dbReference type="PDB" id="7E80">
    <property type="method" value="EM"/>
    <property type="resolution" value="3.67 A"/>
    <property type="chains" value="f/g/h/i/j/p=1-134"/>
</dbReference>
<dbReference type="PDB" id="7E82">
    <property type="method" value="EM"/>
    <property type="resolution" value="3.30 A"/>
    <property type="chains" value="f/g/h/i/j/p=1-134"/>
</dbReference>
<dbReference type="PDB" id="8WK3">
    <property type="method" value="EM"/>
    <property type="resolution" value="3.30 A"/>
    <property type="chains" value="V/W/X/Y/Z/a=1-134"/>
</dbReference>
<dbReference type="PDB" id="8WKK">
    <property type="method" value="EM"/>
    <property type="resolution" value="3.30 A"/>
    <property type="chains" value="V/W/X/Y/Z/a=1-134"/>
</dbReference>
<dbReference type="PDB" id="8WKQ">
    <property type="method" value="EM"/>
    <property type="resolution" value="3.80 A"/>
    <property type="chains" value="V/W/X/Y/Z/a=1-134"/>
</dbReference>
<dbReference type="PDB" id="8WL2">
    <property type="method" value="EM"/>
    <property type="resolution" value="3.40 A"/>
    <property type="chains" value="BA/BB/BC/BD/BE/BF=1-134"/>
</dbReference>
<dbReference type="PDB" id="8WLH">
    <property type="method" value="EM"/>
    <property type="resolution" value="3.70 A"/>
    <property type="chains" value="V/W/X/Y/Z/a=1-134"/>
</dbReference>
<dbReference type="PDB" id="8WLN">
    <property type="method" value="EM"/>
    <property type="resolution" value="4.30 A"/>
    <property type="chains" value="V/W/X/Y/Z/a=1-134"/>
</dbReference>
<dbReference type="PDB" id="8WLQ">
    <property type="method" value="EM"/>
    <property type="resolution" value="3.80 A"/>
    <property type="chains" value="V/W/X/Y/Z/a=1-134"/>
</dbReference>
<dbReference type="PDB" id="8WLT">
    <property type="method" value="EM"/>
    <property type="resolution" value="4.10 A"/>
    <property type="chains" value="BA/BB/BC/BD/BE/BF=1-134"/>
</dbReference>
<dbReference type="PDB" id="8WO5">
    <property type="method" value="EM"/>
    <property type="resolution" value="7.40 A"/>
    <property type="chains" value="BA/BB/BC/BD/BE/BF=1-134"/>
</dbReference>
<dbReference type="PDB" id="8WOE">
    <property type="method" value="EM"/>
    <property type="resolution" value="4.30 A"/>
    <property type="chains" value="BA/BB/BC/BD/BE/BF=1-134"/>
</dbReference>
<dbReference type="PDBsum" id="7BIN"/>
<dbReference type="PDBsum" id="7CG0"/>
<dbReference type="PDBsum" id="7CGO"/>
<dbReference type="PDBsum" id="7E80"/>
<dbReference type="PDBsum" id="7E82"/>
<dbReference type="PDBsum" id="8WK3"/>
<dbReference type="PDBsum" id="8WKK"/>
<dbReference type="PDBsum" id="8WKQ"/>
<dbReference type="PDBsum" id="8WL2"/>
<dbReference type="PDBsum" id="8WLH"/>
<dbReference type="PDBsum" id="8WLN"/>
<dbReference type="PDBsum" id="8WLQ"/>
<dbReference type="PDBsum" id="8WLT"/>
<dbReference type="PDBsum" id="8WO5"/>
<dbReference type="PDBsum" id="8WOE"/>
<dbReference type="EMDB" id="EMD-12192"/>
<dbReference type="EMDB" id="EMD-30348"/>
<dbReference type="EMDB" id="EMD-30359"/>
<dbReference type="EMDB" id="EMD-31006"/>
<dbReference type="EMDB" id="EMD-31008"/>
<dbReference type="EMDB" id="EMD-37594"/>
<dbReference type="EMDB" id="EMD-37601"/>
<dbReference type="EMDB" id="EMD-37605"/>
<dbReference type="EMDB" id="EMD-37611"/>
<dbReference type="EMDB" id="EMD-37619"/>
<dbReference type="EMDB" id="EMD-37625"/>
<dbReference type="EMDB" id="EMD-37628"/>
<dbReference type="EMDB" id="EMD-37630"/>
<dbReference type="EMDB" id="EMD-37679"/>
<dbReference type="EMDB" id="EMD-37684"/>
<dbReference type="SMR" id="P0A1I7"/>
<dbReference type="STRING" id="99287.STM1175"/>
<dbReference type="PaxDb" id="99287-STM1175"/>
<dbReference type="DNASU" id="1252693"/>
<dbReference type="GeneID" id="1252693"/>
<dbReference type="KEGG" id="stm:STM1175"/>
<dbReference type="PATRIC" id="fig|99287.12.peg.1243"/>
<dbReference type="HOGENOM" id="CLU_123272_1_0_6"/>
<dbReference type="OMA" id="YVAYPNI"/>
<dbReference type="PhylomeDB" id="P0A1I7"/>
<dbReference type="BioCyc" id="SENT99287:STM1175-MONOMER"/>
<dbReference type="Proteomes" id="UP000001014">
    <property type="component" value="Chromosome"/>
</dbReference>
<dbReference type="GO" id="GO:0009288">
    <property type="term" value="C:bacterial-type flagellum"/>
    <property type="evidence" value="ECO:0000318"/>
    <property type="project" value="GO_Central"/>
</dbReference>
<dbReference type="GO" id="GO:0030694">
    <property type="term" value="C:bacterial-type flagellum basal body, rod"/>
    <property type="evidence" value="ECO:0007669"/>
    <property type="project" value="InterPro"/>
</dbReference>
<dbReference type="GO" id="GO:0071978">
    <property type="term" value="P:bacterial-type flagellum-dependent swarming motility"/>
    <property type="evidence" value="ECO:0000318"/>
    <property type="project" value="GO_Central"/>
</dbReference>
<dbReference type="InterPro" id="IPR001444">
    <property type="entry name" value="Flag_bb_rod_N"/>
</dbReference>
<dbReference type="InterPro" id="IPR019776">
    <property type="entry name" value="Flagellar_basal_body_rod_CS"/>
</dbReference>
<dbReference type="InterPro" id="IPR010930">
    <property type="entry name" value="Flg_bb/hook_C_dom"/>
</dbReference>
<dbReference type="InterPro" id="IPR006299">
    <property type="entry name" value="FlgC"/>
</dbReference>
<dbReference type="NCBIfam" id="TIGR01395">
    <property type="entry name" value="FlgC"/>
    <property type="match status" value="1"/>
</dbReference>
<dbReference type="PANTHER" id="PTHR30435:SF2">
    <property type="entry name" value="FLAGELLAR BASAL-BODY ROD PROTEIN FLGC"/>
    <property type="match status" value="1"/>
</dbReference>
<dbReference type="PANTHER" id="PTHR30435">
    <property type="entry name" value="FLAGELLAR PROTEIN"/>
    <property type="match status" value="1"/>
</dbReference>
<dbReference type="Pfam" id="PF00460">
    <property type="entry name" value="Flg_bb_rod"/>
    <property type="match status" value="1"/>
</dbReference>
<dbReference type="Pfam" id="PF06429">
    <property type="entry name" value="Flg_bbr_C"/>
    <property type="match status" value="1"/>
</dbReference>
<dbReference type="PROSITE" id="PS00588">
    <property type="entry name" value="FLAGELLA_BB_ROD"/>
    <property type="match status" value="1"/>
</dbReference>
<reference key="1">
    <citation type="journal article" date="1990" name="J. Mol. Biol.">
        <title>FlgB, FlgC, FlgF and FlgG. A family of structurally related proteins in the flagellar basal body of Salmonella typhimurium.</title>
        <authorList>
            <person name="Homma M."/>
            <person name="Kutsukake K."/>
            <person name="Hasebe M."/>
            <person name="Iino T."/>
            <person name="Macnab R.M."/>
        </authorList>
    </citation>
    <scope>NUCLEOTIDE SEQUENCE [GENOMIC DNA]</scope>
</reference>
<reference key="2">
    <citation type="journal article" date="1990" name="J. Bacteriol.">
        <title>Transcriptional analysis of the flagellar regulon of Salmonella typhimurium.</title>
        <authorList>
            <person name="Kutsukake K."/>
            <person name="Ohya Y."/>
            <person name="Iino T."/>
        </authorList>
    </citation>
    <scope>NUCLEOTIDE SEQUENCE [GENOMIC DNA]</scope>
</reference>
<reference key="3">
    <citation type="journal article" date="2001" name="Nature">
        <title>Complete genome sequence of Salmonella enterica serovar Typhimurium LT2.</title>
        <authorList>
            <person name="McClelland M."/>
            <person name="Sanderson K.E."/>
            <person name="Spieth J."/>
            <person name="Clifton S.W."/>
            <person name="Latreille P."/>
            <person name="Courtney L."/>
            <person name="Porwollik S."/>
            <person name="Ali J."/>
            <person name="Dante M."/>
            <person name="Du F."/>
            <person name="Hou S."/>
            <person name="Layman D."/>
            <person name="Leonard S."/>
            <person name="Nguyen C."/>
            <person name="Scott K."/>
            <person name="Holmes A."/>
            <person name="Grewal N."/>
            <person name="Mulvaney E."/>
            <person name="Ryan E."/>
            <person name="Sun H."/>
            <person name="Florea L."/>
            <person name="Miller W."/>
            <person name="Stoneking T."/>
            <person name="Nhan M."/>
            <person name="Waterston R."/>
            <person name="Wilson R.K."/>
        </authorList>
    </citation>
    <scope>NUCLEOTIDE SEQUENCE [LARGE SCALE GENOMIC DNA]</scope>
    <source>
        <strain>LT2 / SGSC1412 / ATCC 700720</strain>
    </source>
</reference>
<reference key="4">
    <citation type="journal article" date="1990" name="J. Mol. Biol.">
        <title>Stoichiometric analysis of the flagellar hook-(basal-body) complex of Salmonella typhimurium.</title>
        <authorList>
            <person name="Jones C.J."/>
            <person name="Macnab R.M."/>
            <person name="Okino H."/>
            <person name="Aizawa S."/>
        </authorList>
    </citation>
    <scope>PROTEIN SEQUENCE OF 1-5</scope>
</reference>
<protein>
    <recommendedName>
        <fullName>Flagellar basal-body rod protein FlgC</fullName>
    </recommendedName>
    <alternativeName>
        <fullName>Putative proximal rod protein</fullName>
    </alternativeName>
</protein>